<reference key="1">
    <citation type="journal article" date="2001" name="Nature">
        <title>Genome sequence of enterohaemorrhagic Escherichia coli O157:H7.</title>
        <authorList>
            <person name="Perna N.T."/>
            <person name="Plunkett G. III"/>
            <person name="Burland V."/>
            <person name="Mau B."/>
            <person name="Glasner J.D."/>
            <person name="Rose D.J."/>
            <person name="Mayhew G.F."/>
            <person name="Evans P.S."/>
            <person name="Gregor J."/>
            <person name="Kirkpatrick H.A."/>
            <person name="Posfai G."/>
            <person name="Hackett J."/>
            <person name="Klink S."/>
            <person name="Boutin A."/>
            <person name="Shao Y."/>
            <person name="Miller L."/>
            <person name="Grotbeck E.J."/>
            <person name="Davis N.W."/>
            <person name="Lim A."/>
            <person name="Dimalanta E.T."/>
            <person name="Potamousis K."/>
            <person name="Apodaca J."/>
            <person name="Anantharaman T.S."/>
            <person name="Lin J."/>
            <person name="Yen G."/>
            <person name="Schwartz D.C."/>
            <person name="Welch R.A."/>
            <person name="Blattner F.R."/>
        </authorList>
    </citation>
    <scope>NUCLEOTIDE SEQUENCE [LARGE SCALE GENOMIC DNA]</scope>
    <source>
        <strain>O157:H7 / EDL933 / ATCC 700927 / EHEC</strain>
    </source>
</reference>
<reference key="2">
    <citation type="journal article" date="2001" name="DNA Res.">
        <title>Complete genome sequence of enterohemorrhagic Escherichia coli O157:H7 and genomic comparison with a laboratory strain K-12.</title>
        <authorList>
            <person name="Hayashi T."/>
            <person name="Makino K."/>
            <person name="Ohnishi M."/>
            <person name="Kurokawa K."/>
            <person name="Ishii K."/>
            <person name="Yokoyama K."/>
            <person name="Han C.-G."/>
            <person name="Ohtsubo E."/>
            <person name="Nakayama K."/>
            <person name="Murata T."/>
            <person name="Tanaka M."/>
            <person name="Tobe T."/>
            <person name="Iida T."/>
            <person name="Takami H."/>
            <person name="Honda T."/>
            <person name="Sasakawa C."/>
            <person name="Ogasawara N."/>
            <person name="Yasunaga T."/>
            <person name="Kuhara S."/>
            <person name="Shiba T."/>
            <person name="Hattori M."/>
            <person name="Shinagawa H."/>
        </authorList>
    </citation>
    <scope>NUCLEOTIDE SEQUENCE [LARGE SCALE GENOMIC DNA]</scope>
    <source>
        <strain>O157:H7 / Sakai / RIMD 0509952 / EHEC</strain>
    </source>
</reference>
<gene>
    <name type="primary">manX</name>
    <name type="ordered locus">Z2860</name>
    <name type="ordered locus">ECs2527</name>
</gene>
<evidence type="ECO:0000250" key="1"/>
<evidence type="ECO:0000250" key="2">
    <source>
        <dbReference type="UniProtKB" id="P69797"/>
    </source>
</evidence>
<evidence type="ECO:0000255" key="3">
    <source>
        <dbReference type="PROSITE-ProRule" id="PRU00419"/>
    </source>
</evidence>
<evidence type="ECO:0000255" key="4">
    <source>
        <dbReference type="PROSITE-ProRule" id="PRU00424"/>
    </source>
</evidence>
<evidence type="ECO:0000305" key="5"/>
<name>PTNAB_ECO57</name>
<proteinExistence type="inferred from homology"/>
<accession>P69799</accession>
<accession>P08186</accession>
<accession>Q47350</accession>
<comment type="function">
    <text evidence="2">The phosphoenolpyruvate-dependent sugar phosphotransferase system (sugar PTS), a major carbohydrate active transport system, catalyzes the phosphorylation of incoming sugar substrates concomitantly with their translocation across the cell membrane. The enzyme II ManXYZ PTS system is involved in mannose transport.</text>
</comment>
<comment type="catalytic activity">
    <reaction evidence="2">
        <text>D-mannose(out) + N(pros)-phospho-L-histidyl-[protein] = D-mannose 6-phosphate(in) + L-histidyl-[protein]</text>
        <dbReference type="Rhea" id="RHEA:49232"/>
        <dbReference type="Rhea" id="RHEA-COMP:9745"/>
        <dbReference type="Rhea" id="RHEA-COMP:9746"/>
        <dbReference type="ChEBI" id="CHEBI:4208"/>
        <dbReference type="ChEBI" id="CHEBI:29979"/>
        <dbReference type="ChEBI" id="CHEBI:58735"/>
        <dbReference type="ChEBI" id="CHEBI:64837"/>
        <dbReference type="EC" id="2.7.1.191"/>
    </reaction>
</comment>
<comment type="subunit">
    <text evidence="2">Homodimer.</text>
</comment>
<comment type="subcellular location">
    <subcellularLocation>
        <location evidence="2">Cytoplasm</location>
    </subcellularLocation>
    <subcellularLocation>
        <location evidence="2">Cell inner membrane</location>
        <topology evidence="2">Peripheral membrane protein</topology>
    </subcellularLocation>
</comment>
<comment type="domain">
    <text evidence="2 5">The PTS EIIA type-4 domain is phosphorylated by phospho-HPr on a histidyl residue. Then, it transfers the phosphoryl group to the PTS EIIB type-4 domain.</text>
</comment>
<comment type="domain">
    <text evidence="4">The PTS EIIB type-4 domain is phosphorylated by phospho-EIIA on a histidyl residue. Then, it transfers the phosphoryl group to the sugar substrate concomitantly with the sugar uptake processed by the PTS EIIC type-4 domain.</text>
</comment>
<dbReference type="EC" id="2.7.1.191" evidence="2"/>
<dbReference type="EMBL" id="AE005174">
    <property type="protein sequence ID" value="AAG56806.1"/>
    <property type="molecule type" value="Genomic_DNA"/>
</dbReference>
<dbReference type="EMBL" id="BA000007">
    <property type="protein sequence ID" value="BAB35950.1"/>
    <property type="molecule type" value="Genomic_DNA"/>
</dbReference>
<dbReference type="PIR" id="G90944">
    <property type="entry name" value="G90944"/>
</dbReference>
<dbReference type="RefSeq" id="NP_310554.1">
    <property type="nucleotide sequence ID" value="NC_002695.1"/>
</dbReference>
<dbReference type="RefSeq" id="WP_000150543.1">
    <property type="nucleotide sequence ID" value="NZ_VOAI01000010.1"/>
</dbReference>
<dbReference type="SMR" id="P69799"/>
<dbReference type="STRING" id="155864.Z2860"/>
<dbReference type="GeneID" id="912501"/>
<dbReference type="GeneID" id="93776066"/>
<dbReference type="KEGG" id="ece:Z2860"/>
<dbReference type="KEGG" id="ecs:ECs_2527"/>
<dbReference type="PATRIC" id="fig|386585.9.peg.2647"/>
<dbReference type="eggNOG" id="COG2893">
    <property type="taxonomic scope" value="Bacteria"/>
</dbReference>
<dbReference type="eggNOG" id="COG3444">
    <property type="taxonomic scope" value="Bacteria"/>
</dbReference>
<dbReference type="HOGENOM" id="CLU_074797_0_0_6"/>
<dbReference type="OMA" id="EMIFGKQ"/>
<dbReference type="Proteomes" id="UP000000558">
    <property type="component" value="Chromosome"/>
</dbReference>
<dbReference type="Proteomes" id="UP000002519">
    <property type="component" value="Chromosome"/>
</dbReference>
<dbReference type="GO" id="GO:0005737">
    <property type="term" value="C:cytoplasm"/>
    <property type="evidence" value="ECO:0007669"/>
    <property type="project" value="UniProtKB-SubCell"/>
</dbReference>
<dbReference type="GO" id="GO:0005886">
    <property type="term" value="C:plasma membrane"/>
    <property type="evidence" value="ECO:0007669"/>
    <property type="project" value="UniProtKB-SubCell"/>
</dbReference>
<dbReference type="GO" id="GO:0016301">
    <property type="term" value="F:kinase activity"/>
    <property type="evidence" value="ECO:0007669"/>
    <property type="project" value="UniProtKB-KW"/>
</dbReference>
<dbReference type="GO" id="GO:0008982">
    <property type="term" value="F:protein-N(PI)-phosphohistidine-sugar phosphotransferase activity"/>
    <property type="evidence" value="ECO:0007669"/>
    <property type="project" value="InterPro"/>
</dbReference>
<dbReference type="GO" id="GO:0009401">
    <property type="term" value="P:phosphoenolpyruvate-dependent sugar phosphotransferase system"/>
    <property type="evidence" value="ECO:0007669"/>
    <property type="project" value="UniProtKB-KW"/>
</dbReference>
<dbReference type="CDD" id="cd00006">
    <property type="entry name" value="PTS_IIA_man"/>
    <property type="match status" value="1"/>
</dbReference>
<dbReference type="CDD" id="cd00001">
    <property type="entry name" value="PTS_IIB_man"/>
    <property type="match status" value="1"/>
</dbReference>
<dbReference type="FunFam" id="3.40.35.10:FF:000001">
    <property type="entry name" value="PTS system mannose-specific EIIAB component"/>
    <property type="match status" value="1"/>
</dbReference>
<dbReference type="FunFam" id="3.40.50.510:FF:000001">
    <property type="entry name" value="PTS system mannose-specific transporter subunit IIAB"/>
    <property type="match status" value="1"/>
</dbReference>
<dbReference type="Gene3D" id="3.40.50.510">
    <property type="entry name" value="Phosphotransferase system, mannose-type IIA component"/>
    <property type="match status" value="1"/>
</dbReference>
<dbReference type="Gene3D" id="3.40.35.10">
    <property type="entry name" value="Phosphotransferase system, sorbose subfamily IIB component"/>
    <property type="match status" value="1"/>
</dbReference>
<dbReference type="InterPro" id="IPR051471">
    <property type="entry name" value="Bacterial_PTS_sugar_comp"/>
</dbReference>
<dbReference type="InterPro" id="IPR013789">
    <property type="entry name" value="PTS_EIIA_man"/>
</dbReference>
<dbReference type="InterPro" id="IPR004701">
    <property type="entry name" value="PTS_EIIA_man-typ"/>
</dbReference>
<dbReference type="InterPro" id="IPR036662">
    <property type="entry name" value="PTS_EIIA_man-typ_sf"/>
</dbReference>
<dbReference type="InterPro" id="IPR033887">
    <property type="entry name" value="PTS_IIA_man"/>
</dbReference>
<dbReference type="InterPro" id="IPR004720">
    <property type="entry name" value="PTS_IIB_sorbose-sp"/>
</dbReference>
<dbReference type="InterPro" id="IPR036667">
    <property type="entry name" value="PTS_IIB_sorbose-sp_sf"/>
</dbReference>
<dbReference type="InterPro" id="IPR018455">
    <property type="entry name" value="PTS_IIB_sorbose-sp_subgr"/>
</dbReference>
<dbReference type="NCBIfam" id="TIGR00824">
    <property type="entry name" value="EIIA-man"/>
    <property type="match status" value="1"/>
</dbReference>
<dbReference type="NCBIfam" id="NF011670">
    <property type="entry name" value="PRK15088.1"/>
    <property type="match status" value="1"/>
</dbReference>
<dbReference type="NCBIfam" id="TIGR00854">
    <property type="entry name" value="pts-sorbose"/>
    <property type="match status" value="1"/>
</dbReference>
<dbReference type="PANTHER" id="PTHR33799">
    <property type="entry name" value="PTS PERMEASE-RELATED-RELATED"/>
    <property type="match status" value="1"/>
</dbReference>
<dbReference type="PANTHER" id="PTHR33799:SF1">
    <property type="entry name" value="PTS SYSTEM MANNOSE-SPECIFIC EIIAB COMPONENT-RELATED"/>
    <property type="match status" value="1"/>
</dbReference>
<dbReference type="Pfam" id="PF03610">
    <property type="entry name" value="EIIA-man"/>
    <property type="match status" value="1"/>
</dbReference>
<dbReference type="Pfam" id="PF03830">
    <property type="entry name" value="PTSIIB_sorb"/>
    <property type="match status" value="1"/>
</dbReference>
<dbReference type="SUPFAM" id="SSF52728">
    <property type="entry name" value="PTS IIb component"/>
    <property type="match status" value="1"/>
</dbReference>
<dbReference type="SUPFAM" id="SSF53062">
    <property type="entry name" value="PTS system fructose IIA component-like"/>
    <property type="match status" value="1"/>
</dbReference>
<dbReference type="PROSITE" id="PS51096">
    <property type="entry name" value="PTS_EIIA_TYPE_4"/>
    <property type="match status" value="1"/>
</dbReference>
<dbReference type="PROSITE" id="PS51101">
    <property type="entry name" value="PTS_EIIB_TYPE_4"/>
    <property type="match status" value="1"/>
</dbReference>
<sequence length="323" mass="35048">MTIAIVIGTHGWAAEQLLKTAEMLLGEQENVGWIDFVPGENAETLIEKYNAQLAKLDTTKGVLFLVDTWGGSPFNAASRIVVDKEHYEVIAGVNIPMLVETLMARDDDPSFDELVALAVETGREGVKALKAKPVEKAAPAPAAAAPKAAPTPAKPMGPNDYMVIGLARIDDRLIHGQVATRWTKETNVSRIIVVSDEVAADTVRKTLLTQVAPPGVTAHVVDVAKMIRVYNNPKYAGERVMLLFTNPTDVERLVEGGVKITSVNVGGMAFRQGKTQVNNAVSVDEKDIEAFKKLNARGIELEVRKVSTDPKLKMMDLISKIDK</sequence>
<organism>
    <name type="scientific">Escherichia coli O157:H7</name>
    <dbReference type="NCBI Taxonomy" id="83334"/>
    <lineage>
        <taxon>Bacteria</taxon>
        <taxon>Pseudomonadati</taxon>
        <taxon>Pseudomonadota</taxon>
        <taxon>Gammaproteobacteria</taxon>
        <taxon>Enterobacterales</taxon>
        <taxon>Enterobacteriaceae</taxon>
        <taxon>Escherichia</taxon>
    </lineage>
</organism>
<keyword id="KW-0007">Acetylation</keyword>
<keyword id="KW-0997">Cell inner membrane</keyword>
<keyword id="KW-1003">Cell membrane</keyword>
<keyword id="KW-0963">Cytoplasm</keyword>
<keyword id="KW-0418">Kinase</keyword>
<keyword id="KW-0472">Membrane</keyword>
<keyword id="KW-0597">Phosphoprotein</keyword>
<keyword id="KW-0598">Phosphotransferase system</keyword>
<keyword id="KW-1185">Reference proteome</keyword>
<keyword id="KW-0762">Sugar transport</keyword>
<keyword id="KW-0808">Transferase</keyword>
<keyword id="KW-0813">Transport</keyword>
<protein>
    <recommendedName>
        <fullName evidence="2">PTS system mannose-specific EIIAB component</fullName>
        <ecNumber evidence="2">2.7.1.191</ecNumber>
    </recommendedName>
    <alternativeName>
        <fullName evidence="2">EIIAB-Man</fullName>
    </alternativeName>
    <alternativeName>
        <fullName evidence="2">EIII-Man</fullName>
    </alternativeName>
    <domain>
        <recommendedName>
            <fullName evidence="2">Mannose-specific phosphotransferase enzyme IIA component</fullName>
        </recommendedName>
        <alternativeName>
            <fullName evidence="2">PTS system mannose-specific EIIA component</fullName>
        </alternativeName>
    </domain>
    <domain>
        <recommendedName>
            <fullName evidence="2">Mannose-specific phosphotransferase enzyme IIB component</fullName>
        </recommendedName>
        <alternativeName>
            <fullName evidence="2">PTS system mannose-specific EIIB component</fullName>
        </alternativeName>
    </domain>
</protein>
<feature type="initiator methionine" description="Removed" evidence="1">
    <location>
        <position position="1"/>
    </location>
</feature>
<feature type="chain" id="PRO_0000186655" description="PTS system mannose-specific EIIAB component">
    <location>
        <begin position="2"/>
        <end position="323"/>
    </location>
</feature>
<feature type="domain" description="PTS EIIA type-4" evidence="3">
    <location>
        <begin position="2"/>
        <end position="124"/>
    </location>
</feature>
<feature type="domain" description="PTS EIIB type-4" evidence="4">
    <location>
        <begin position="157"/>
        <end position="320"/>
    </location>
</feature>
<feature type="region of interest" description="Hinge" evidence="2">
    <location>
        <begin position="137"/>
        <end position="155"/>
    </location>
</feature>
<feature type="active site" description="Tele-phosphohistidine intermediate; for EIIA activity" evidence="3">
    <location>
        <position position="10"/>
    </location>
</feature>
<feature type="active site" description="Pros-phosphohistidine intermediate; for EIIB activity" evidence="2">
    <location>
        <position position="175"/>
    </location>
</feature>
<feature type="site" description="Involved in the phosphoryl transfer between H-10 and H-175" evidence="2">
    <location>
        <position position="89"/>
    </location>
</feature>
<feature type="modified residue" description="Phosphohistidine; by HPr" evidence="2">
    <location>
        <position position="10"/>
    </location>
</feature>
<feature type="modified residue" description="N6-acetyllysine" evidence="2">
    <location>
        <position position="55"/>
    </location>
</feature>
<feature type="modified residue" description="Phosphohistidine; by EIIA" evidence="2 4">
    <location>
        <position position="175"/>
    </location>
</feature>
<feature type="modified residue" description="N6-acetyllysine" evidence="2">
    <location>
        <position position="234"/>
    </location>
</feature>